<dbReference type="EC" id="3.4.24.-" evidence="1"/>
<dbReference type="EMBL" id="CP000934">
    <property type="protein sequence ID" value="ACE83478.1"/>
    <property type="molecule type" value="Genomic_DNA"/>
</dbReference>
<dbReference type="RefSeq" id="WP_012486197.1">
    <property type="nucleotide sequence ID" value="NC_010995.1"/>
</dbReference>
<dbReference type="SMR" id="B3PJ06"/>
<dbReference type="STRING" id="498211.CJA_0517"/>
<dbReference type="KEGG" id="cja:CJA_0517"/>
<dbReference type="eggNOG" id="COG0501">
    <property type="taxonomic scope" value="Bacteria"/>
</dbReference>
<dbReference type="HOGENOM" id="CLU_042266_1_0_6"/>
<dbReference type="OrthoDB" id="15218at2"/>
<dbReference type="Proteomes" id="UP000001036">
    <property type="component" value="Chromosome"/>
</dbReference>
<dbReference type="GO" id="GO:0005886">
    <property type="term" value="C:plasma membrane"/>
    <property type="evidence" value="ECO:0007669"/>
    <property type="project" value="UniProtKB-SubCell"/>
</dbReference>
<dbReference type="GO" id="GO:0004222">
    <property type="term" value="F:metalloendopeptidase activity"/>
    <property type="evidence" value="ECO:0007669"/>
    <property type="project" value="UniProtKB-UniRule"/>
</dbReference>
<dbReference type="GO" id="GO:0008270">
    <property type="term" value="F:zinc ion binding"/>
    <property type="evidence" value="ECO:0007669"/>
    <property type="project" value="UniProtKB-UniRule"/>
</dbReference>
<dbReference type="GO" id="GO:0006508">
    <property type="term" value="P:proteolysis"/>
    <property type="evidence" value="ECO:0007669"/>
    <property type="project" value="UniProtKB-KW"/>
</dbReference>
<dbReference type="CDD" id="cd07335">
    <property type="entry name" value="M48B_HtpX_like"/>
    <property type="match status" value="1"/>
</dbReference>
<dbReference type="Gene3D" id="3.30.2010.10">
    <property type="entry name" value="Metalloproteases ('zincins'), catalytic domain"/>
    <property type="match status" value="1"/>
</dbReference>
<dbReference type="HAMAP" id="MF_00188">
    <property type="entry name" value="Pept_M48_protease_HtpX"/>
    <property type="match status" value="1"/>
</dbReference>
<dbReference type="InterPro" id="IPR050083">
    <property type="entry name" value="HtpX_protease"/>
</dbReference>
<dbReference type="InterPro" id="IPR022919">
    <property type="entry name" value="Pept_M48_protease_HtpX"/>
</dbReference>
<dbReference type="InterPro" id="IPR001915">
    <property type="entry name" value="Peptidase_M48"/>
</dbReference>
<dbReference type="NCBIfam" id="NF003965">
    <property type="entry name" value="PRK05457.1"/>
    <property type="match status" value="1"/>
</dbReference>
<dbReference type="PANTHER" id="PTHR43221">
    <property type="entry name" value="PROTEASE HTPX"/>
    <property type="match status" value="1"/>
</dbReference>
<dbReference type="PANTHER" id="PTHR43221:SF1">
    <property type="entry name" value="PROTEASE HTPX"/>
    <property type="match status" value="1"/>
</dbReference>
<dbReference type="Pfam" id="PF01435">
    <property type="entry name" value="Peptidase_M48"/>
    <property type="match status" value="1"/>
</dbReference>
<name>HTPX_CELJU</name>
<feature type="chain" id="PRO_1000098813" description="Protease HtpX">
    <location>
        <begin position="1"/>
        <end position="293"/>
    </location>
</feature>
<feature type="transmembrane region" description="Helical" evidence="1">
    <location>
        <begin position="4"/>
        <end position="24"/>
    </location>
</feature>
<feature type="transmembrane region" description="Helical" evidence="1">
    <location>
        <begin position="38"/>
        <end position="58"/>
    </location>
</feature>
<feature type="transmembrane region" description="Helical" evidence="1">
    <location>
        <begin position="156"/>
        <end position="176"/>
    </location>
</feature>
<feature type="transmembrane region" description="Helical" evidence="1">
    <location>
        <begin position="193"/>
        <end position="213"/>
    </location>
</feature>
<feature type="active site" evidence="1">
    <location>
        <position position="146"/>
    </location>
</feature>
<feature type="binding site" evidence="1">
    <location>
        <position position="145"/>
    </location>
    <ligand>
        <name>Zn(2+)</name>
        <dbReference type="ChEBI" id="CHEBI:29105"/>
        <note>catalytic</note>
    </ligand>
</feature>
<feature type="binding site" evidence="1">
    <location>
        <position position="149"/>
    </location>
    <ligand>
        <name>Zn(2+)</name>
        <dbReference type="ChEBI" id="CHEBI:29105"/>
        <note>catalytic</note>
    </ligand>
</feature>
<feature type="binding site" evidence="1">
    <location>
        <position position="222"/>
    </location>
    <ligand>
        <name>Zn(2+)</name>
        <dbReference type="ChEBI" id="CHEBI:29105"/>
        <note>catalytic</note>
    </ligand>
</feature>
<reference key="1">
    <citation type="journal article" date="2008" name="J. Bacteriol.">
        <title>Insights into plant cell wall degradation from the genome sequence of the soil bacterium Cellvibrio japonicus.</title>
        <authorList>
            <person name="DeBoy R.T."/>
            <person name="Mongodin E.F."/>
            <person name="Fouts D.E."/>
            <person name="Tailford L.E."/>
            <person name="Khouri H."/>
            <person name="Emerson J.B."/>
            <person name="Mohamoud Y."/>
            <person name="Watkins K."/>
            <person name="Henrissat B."/>
            <person name="Gilbert H.J."/>
            <person name="Nelson K.E."/>
        </authorList>
    </citation>
    <scope>NUCLEOTIDE SEQUENCE [LARGE SCALE GENOMIC DNA]</scope>
    <source>
        <strain>Ueda107</strain>
    </source>
</reference>
<proteinExistence type="inferred from homology"/>
<comment type="cofactor">
    <cofactor evidence="1">
        <name>Zn(2+)</name>
        <dbReference type="ChEBI" id="CHEBI:29105"/>
    </cofactor>
    <text evidence="1">Binds 1 zinc ion per subunit.</text>
</comment>
<comment type="subcellular location">
    <subcellularLocation>
        <location evidence="1">Cell inner membrane</location>
        <topology evidence="1">Multi-pass membrane protein</topology>
    </subcellularLocation>
</comment>
<comment type="similarity">
    <text evidence="1">Belongs to the peptidase M48B family.</text>
</comment>
<gene>
    <name evidence="1" type="primary">htpX</name>
    <name type="ordered locus">CJA_0517</name>
</gene>
<keyword id="KW-0997">Cell inner membrane</keyword>
<keyword id="KW-1003">Cell membrane</keyword>
<keyword id="KW-0378">Hydrolase</keyword>
<keyword id="KW-0472">Membrane</keyword>
<keyword id="KW-0479">Metal-binding</keyword>
<keyword id="KW-0482">Metalloprotease</keyword>
<keyword id="KW-0645">Protease</keyword>
<keyword id="KW-1185">Reference proteome</keyword>
<keyword id="KW-0346">Stress response</keyword>
<keyword id="KW-0812">Transmembrane</keyword>
<keyword id="KW-1133">Transmembrane helix</keyword>
<keyword id="KW-0862">Zinc</keyword>
<evidence type="ECO:0000255" key="1">
    <source>
        <dbReference type="HAMAP-Rule" id="MF_00188"/>
    </source>
</evidence>
<sequence length="293" mass="31698">MLRIGLFLLTNLAVLVVAGVVLSLLGVGNYRTADGLDLTNLLIFCAVFGFVGSFISLFLSKWMAKKTMGVQLIEQPRNADEKWLVDTVVELSQKAGIKTPEIGVFAAQESNAFATGWNRNDALVAVSLGLLQRFERDEVKAVLAHEIGHVANGDMITLSLIQGVVNTFVMFFARIIGDLVDRVIFKNEEGRGIAFFITTIVAELVLGILASMIVAAFSRYREYRADAAGATLADRGAMIRALQRLQAEMSAGVESPLPSSMRAFGISGGVRNLFASHPPLEARIQALRDSAHG</sequence>
<accession>B3PJ06</accession>
<protein>
    <recommendedName>
        <fullName evidence="1">Protease HtpX</fullName>
        <ecNumber evidence="1">3.4.24.-</ecNumber>
    </recommendedName>
    <alternativeName>
        <fullName evidence="1">Heat shock protein HtpX</fullName>
    </alternativeName>
</protein>
<organism>
    <name type="scientific">Cellvibrio japonicus (strain Ueda107)</name>
    <name type="common">Pseudomonas fluorescens subsp. cellulosa</name>
    <dbReference type="NCBI Taxonomy" id="498211"/>
    <lineage>
        <taxon>Bacteria</taxon>
        <taxon>Pseudomonadati</taxon>
        <taxon>Pseudomonadota</taxon>
        <taxon>Gammaproteobacteria</taxon>
        <taxon>Cellvibrionales</taxon>
        <taxon>Cellvibrionaceae</taxon>
        <taxon>Cellvibrio</taxon>
    </lineage>
</organism>